<feature type="chain" id="PRO_0000366649" description="Ribosomal RNA large subunit methyltransferase H">
    <location>
        <begin position="1"/>
        <end position="155"/>
    </location>
</feature>
<feature type="binding site" evidence="1">
    <location>
        <position position="72"/>
    </location>
    <ligand>
        <name>S-adenosyl-L-methionine</name>
        <dbReference type="ChEBI" id="CHEBI:59789"/>
    </ligand>
</feature>
<feature type="binding site" evidence="1">
    <location>
        <position position="103"/>
    </location>
    <ligand>
        <name>S-adenosyl-L-methionine</name>
        <dbReference type="ChEBI" id="CHEBI:59789"/>
    </ligand>
</feature>
<feature type="binding site" evidence="1">
    <location>
        <begin position="122"/>
        <end position="127"/>
    </location>
    <ligand>
        <name>S-adenosyl-L-methionine</name>
        <dbReference type="ChEBI" id="CHEBI:59789"/>
    </ligand>
</feature>
<comment type="function">
    <text evidence="1">Specifically methylates the pseudouridine at position 1915 (m3Psi1915) in 23S rRNA.</text>
</comment>
<comment type="catalytic activity">
    <reaction evidence="1">
        <text>pseudouridine(1915) in 23S rRNA + S-adenosyl-L-methionine = N(3)-methylpseudouridine(1915) in 23S rRNA + S-adenosyl-L-homocysteine + H(+)</text>
        <dbReference type="Rhea" id="RHEA:42752"/>
        <dbReference type="Rhea" id="RHEA-COMP:10221"/>
        <dbReference type="Rhea" id="RHEA-COMP:10222"/>
        <dbReference type="ChEBI" id="CHEBI:15378"/>
        <dbReference type="ChEBI" id="CHEBI:57856"/>
        <dbReference type="ChEBI" id="CHEBI:59789"/>
        <dbReference type="ChEBI" id="CHEBI:65314"/>
        <dbReference type="ChEBI" id="CHEBI:74486"/>
        <dbReference type="EC" id="2.1.1.177"/>
    </reaction>
</comment>
<comment type="subunit">
    <text evidence="1">Homodimer.</text>
</comment>
<comment type="subcellular location">
    <subcellularLocation>
        <location evidence="1">Cytoplasm</location>
    </subcellularLocation>
</comment>
<comment type="similarity">
    <text evidence="1">Belongs to the RNA methyltransferase RlmH family.</text>
</comment>
<evidence type="ECO:0000255" key="1">
    <source>
        <dbReference type="HAMAP-Rule" id="MF_00658"/>
    </source>
</evidence>
<dbReference type="EC" id="2.1.1.177" evidence="1"/>
<dbReference type="EMBL" id="CP001144">
    <property type="protein sequence ID" value="ACH76418.1"/>
    <property type="molecule type" value="Genomic_DNA"/>
</dbReference>
<dbReference type="RefSeq" id="WP_000776107.1">
    <property type="nucleotide sequence ID" value="NC_011205.1"/>
</dbReference>
<dbReference type="SMR" id="B5FMN7"/>
<dbReference type="GeneID" id="66755108"/>
<dbReference type="KEGG" id="sed:SeD_A0743"/>
<dbReference type="HOGENOM" id="CLU_100552_1_0_6"/>
<dbReference type="Proteomes" id="UP000008322">
    <property type="component" value="Chromosome"/>
</dbReference>
<dbReference type="GO" id="GO:0005737">
    <property type="term" value="C:cytoplasm"/>
    <property type="evidence" value="ECO:0007669"/>
    <property type="project" value="UniProtKB-SubCell"/>
</dbReference>
<dbReference type="GO" id="GO:0070038">
    <property type="term" value="F:rRNA (pseudouridine-N3-)-methyltransferase activity"/>
    <property type="evidence" value="ECO:0007669"/>
    <property type="project" value="UniProtKB-UniRule"/>
</dbReference>
<dbReference type="CDD" id="cd18081">
    <property type="entry name" value="RlmH-like"/>
    <property type="match status" value="1"/>
</dbReference>
<dbReference type="FunFam" id="3.40.1280.10:FF:000004">
    <property type="entry name" value="Ribosomal RNA large subunit methyltransferase H"/>
    <property type="match status" value="1"/>
</dbReference>
<dbReference type="Gene3D" id="3.40.1280.10">
    <property type="match status" value="1"/>
</dbReference>
<dbReference type="HAMAP" id="MF_00658">
    <property type="entry name" value="23SrRNA_methyltr_H"/>
    <property type="match status" value="1"/>
</dbReference>
<dbReference type="InterPro" id="IPR029028">
    <property type="entry name" value="Alpha/beta_knot_MTases"/>
</dbReference>
<dbReference type="InterPro" id="IPR003742">
    <property type="entry name" value="RlmH-like"/>
</dbReference>
<dbReference type="InterPro" id="IPR029026">
    <property type="entry name" value="tRNA_m1G_MTases_N"/>
</dbReference>
<dbReference type="NCBIfam" id="NF000984">
    <property type="entry name" value="PRK00103.1-1"/>
    <property type="match status" value="1"/>
</dbReference>
<dbReference type="NCBIfam" id="NF000986">
    <property type="entry name" value="PRK00103.1-4"/>
    <property type="match status" value="1"/>
</dbReference>
<dbReference type="NCBIfam" id="TIGR00246">
    <property type="entry name" value="tRNA_RlmH_YbeA"/>
    <property type="match status" value="1"/>
</dbReference>
<dbReference type="PANTHER" id="PTHR33603">
    <property type="entry name" value="METHYLTRANSFERASE"/>
    <property type="match status" value="1"/>
</dbReference>
<dbReference type="PANTHER" id="PTHR33603:SF1">
    <property type="entry name" value="RIBOSOMAL RNA LARGE SUBUNIT METHYLTRANSFERASE H"/>
    <property type="match status" value="1"/>
</dbReference>
<dbReference type="Pfam" id="PF02590">
    <property type="entry name" value="SPOUT_MTase"/>
    <property type="match status" value="1"/>
</dbReference>
<dbReference type="PIRSF" id="PIRSF004505">
    <property type="entry name" value="MT_bac"/>
    <property type="match status" value="1"/>
</dbReference>
<dbReference type="SUPFAM" id="SSF75217">
    <property type="entry name" value="alpha/beta knot"/>
    <property type="match status" value="1"/>
</dbReference>
<name>RLMH_SALDC</name>
<gene>
    <name evidence="1" type="primary">rlmH</name>
    <name type="ordered locus">SeD_A0743</name>
</gene>
<organism>
    <name type="scientific">Salmonella dublin (strain CT_02021853)</name>
    <dbReference type="NCBI Taxonomy" id="439851"/>
    <lineage>
        <taxon>Bacteria</taxon>
        <taxon>Pseudomonadati</taxon>
        <taxon>Pseudomonadota</taxon>
        <taxon>Gammaproteobacteria</taxon>
        <taxon>Enterobacterales</taxon>
        <taxon>Enterobacteriaceae</taxon>
        <taxon>Salmonella</taxon>
    </lineage>
</organism>
<proteinExistence type="inferred from homology"/>
<keyword id="KW-0963">Cytoplasm</keyword>
<keyword id="KW-0489">Methyltransferase</keyword>
<keyword id="KW-0698">rRNA processing</keyword>
<keyword id="KW-0949">S-adenosyl-L-methionine</keyword>
<keyword id="KW-0808">Transferase</keyword>
<protein>
    <recommendedName>
        <fullName evidence="1">Ribosomal RNA large subunit methyltransferase H</fullName>
        <ecNumber evidence="1">2.1.1.177</ecNumber>
    </recommendedName>
    <alternativeName>
        <fullName evidence="1">23S rRNA (pseudouridine1915-N3)-methyltransferase</fullName>
    </alternativeName>
    <alternativeName>
        <fullName evidence="1">23S rRNA m3Psi1915 methyltransferase</fullName>
    </alternativeName>
    <alternativeName>
        <fullName evidence="1">rRNA (pseudouridine-N3-)-methyltransferase RlmH</fullName>
    </alternativeName>
</protein>
<sequence>MKLQLVAVGTKMPDWVQTGFTEYLRRFPKDMPFELIEIPAGKRGKNADIKRILDKEGEQMLAAAGKNRIVTLDIPGKPWDTPQLANELERWKQDGRDVSLLIGGPEGLSPACKAAAEQSWSLSALTLPHPLVRVLVAESLYRAWSITTNHPYHRE</sequence>
<reference key="1">
    <citation type="journal article" date="2011" name="J. Bacteriol.">
        <title>Comparative genomics of 28 Salmonella enterica isolates: evidence for CRISPR-mediated adaptive sublineage evolution.</title>
        <authorList>
            <person name="Fricke W.F."/>
            <person name="Mammel M.K."/>
            <person name="McDermott P.F."/>
            <person name="Tartera C."/>
            <person name="White D.G."/>
            <person name="Leclerc J.E."/>
            <person name="Ravel J."/>
            <person name="Cebula T.A."/>
        </authorList>
    </citation>
    <scope>NUCLEOTIDE SEQUENCE [LARGE SCALE GENOMIC DNA]</scope>
    <source>
        <strain>CT_02021853</strain>
    </source>
</reference>
<accession>B5FMN7</accession>